<feature type="chain" id="PRO_1000135519" description="Glucose-6-phosphate isomerase">
    <location>
        <begin position="1"/>
        <end position="549"/>
    </location>
</feature>
<feature type="active site" description="Proton donor" evidence="1">
    <location>
        <position position="355"/>
    </location>
</feature>
<feature type="active site" evidence="1">
    <location>
        <position position="386"/>
    </location>
</feature>
<feature type="active site" evidence="1">
    <location>
        <position position="514"/>
    </location>
</feature>
<keyword id="KW-0963">Cytoplasm</keyword>
<keyword id="KW-0312">Gluconeogenesis</keyword>
<keyword id="KW-0324">Glycolysis</keyword>
<keyword id="KW-0413">Isomerase</keyword>
<reference key="1">
    <citation type="journal article" date="2009" name="Science">
        <title>The dynamics and time scale of ongoing genomic erosion in symbiotic bacteria.</title>
        <authorList>
            <person name="Moran N.A."/>
            <person name="McLaughlin H.J."/>
            <person name="Sorek R."/>
        </authorList>
    </citation>
    <scope>NUCLEOTIDE SEQUENCE [LARGE SCALE GENOMIC DNA]</scope>
    <source>
        <strain>5A</strain>
    </source>
</reference>
<dbReference type="EC" id="5.3.1.9" evidence="1"/>
<dbReference type="EMBL" id="CP001161">
    <property type="protein sequence ID" value="ACL30913.1"/>
    <property type="molecule type" value="Genomic_DNA"/>
</dbReference>
<dbReference type="RefSeq" id="WP_012619394.1">
    <property type="nucleotide sequence ID" value="NC_011833.1"/>
</dbReference>
<dbReference type="SMR" id="B8D8D7"/>
<dbReference type="KEGG" id="bap:BUAP5A_566"/>
<dbReference type="HOGENOM" id="CLU_017947_3_1_6"/>
<dbReference type="OrthoDB" id="140919at2"/>
<dbReference type="UniPathway" id="UPA00109">
    <property type="reaction ID" value="UER00181"/>
</dbReference>
<dbReference type="UniPathway" id="UPA00138"/>
<dbReference type="Proteomes" id="UP000006904">
    <property type="component" value="Chromosome"/>
</dbReference>
<dbReference type="GO" id="GO:0005829">
    <property type="term" value="C:cytosol"/>
    <property type="evidence" value="ECO:0007669"/>
    <property type="project" value="TreeGrafter"/>
</dbReference>
<dbReference type="GO" id="GO:0097367">
    <property type="term" value="F:carbohydrate derivative binding"/>
    <property type="evidence" value="ECO:0007669"/>
    <property type="project" value="InterPro"/>
</dbReference>
<dbReference type="GO" id="GO:0004347">
    <property type="term" value="F:glucose-6-phosphate isomerase activity"/>
    <property type="evidence" value="ECO:0007669"/>
    <property type="project" value="UniProtKB-UniRule"/>
</dbReference>
<dbReference type="GO" id="GO:0048029">
    <property type="term" value="F:monosaccharide binding"/>
    <property type="evidence" value="ECO:0007669"/>
    <property type="project" value="TreeGrafter"/>
</dbReference>
<dbReference type="GO" id="GO:0006094">
    <property type="term" value="P:gluconeogenesis"/>
    <property type="evidence" value="ECO:0007669"/>
    <property type="project" value="UniProtKB-UniRule"/>
</dbReference>
<dbReference type="GO" id="GO:0051156">
    <property type="term" value="P:glucose 6-phosphate metabolic process"/>
    <property type="evidence" value="ECO:0007669"/>
    <property type="project" value="TreeGrafter"/>
</dbReference>
<dbReference type="GO" id="GO:0006096">
    <property type="term" value="P:glycolytic process"/>
    <property type="evidence" value="ECO:0007669"/>
    <property type="project" value="UniProtKB-UniRule"/>
</dbReference>
<dbReference type="CDD" id="cd05015">
    <property type="entry name" value="SIS_PGI_1"/>
    <property type="match status" value="1"/>
</dbReference>
<dbReference type="CDD" id="cd05016">
    <property type="entry name" value="SIS_PGI_2"/>
    <property type="match status" value="1"/>
</dbReference>
<dbReference type="FunFam" id="3.40.50.10490:FF:000004">
    <property type="entry name" value="Glucose-6-phosphate isomerase"/>
    <property type="match status" value="1"/>
</dbReference>
<dbReference type="Gene3D" id="1.10.1390.10">
    <property type="match status" value="1"/>
</dbReference>
<dbReference type="Gene3D" id="3.40.50.10490">
    <property type="entry name" value="Glucose-6-phosphate isomerase like protein, domain 1"/>
    <property type="match status" value="2"/>
</dbReference>
<dbReference type="HAMAP" id="MF_00473">
    <property type="entry name" value="G6P_isomerase"/>
    <property type="match status" value="1"/>
</dbReference>
<dbReference type="InterPro" id="IPR001672">
    <property type="entry name" value="G6P_Isomerase"/>
</dbReference>
<dbReference type="InterPro" id="IPR023096">
    <property type="entry name" value="G6P_Isomerase_C"/>
</dbReference>
<dbReference type="InterPro" id="IPR018189">
    <property type="entry name" value="Phosphoglucose_isomerase_CS"/>
</dbReference>
<dbReference type="InterPro" id="IPR046348">
    <property type="entry name" value="SIS_dom_sf"/>
</dbReference>
<dbReference type="InterPro" id="IPR035476">
    <property type="entry name" value="SIS_PGI_1"/>
</dbReference>
<dbReference type="InterPro" id="IPR035482">
    <property type="entry name" value="SIS_PGI_2"/>
</dbReference>
<dbReference type="NCBIfam" id="NF001211">
    <property type="entry name" value="PRK00179.1"/>
    <property type="match status" value="1"/>
</dbReference>
<dbReference type="PANTHER" id="PTHR11469">
    <property type="entry name" value="GLUCOSE-6-PHOSPHATE ISOMERASE"/>
    <property type="match status" value="1"/>
</dbReference>
<dbReference type="PANTHER" id="PTHR11469:SF1">
    <property type="entry name" value="GLUCOSE-6-PHOSPHATE ISOMERASE"/>
    <property type="match status" value="1"/>
</dbReference>
<dbReference type="Pfam" id="PF00342">
    <property type="entry name" value="PGI"/>
    <property type="match status" value="1"/>
</dbReference>
<dbReference type="PRINTS" id="PR00662">
    <property type="entry name" value="G6PISOMERASE"/>
</dbReference>
<dbReference type="SUPFAM" id="SSF53697">
    <property type="entry name" value="SIS domain"/>
    <property type="match status" value="1"/>
</dbReference>
<dbReference type="PROSITE" id="PS00765">
    <property type="entry name" value="P_GLUCOSE_ISOMERASE_1"/>
    <property type="match status" value="1"/>
</dbReference>
<dbReference type="PROSITE" id="PS00174">
    <property type="entry name" value="P_GLUCOSE_ISOMERASE_2"/>
    <property type="match status" value="1"/>
</dbReference>
<dbReference type="PROSITE" id="PS51463">
    <property type="entry name" value="P_GLUCOSE_ISOMERASE_3"/>
    <property type="match status" value="1"/>
</dbReference>
<gene>
    <name evidence="1" type="primary">pgi</name>
    <name type="ordered locus">BUAP5A_566</name>
</gene>
<name>G6PI_BUCA5</name>
<comment type="function">
    <text evidence="1">Catalyzes the reversible isomerization of glucose-6-phosphate to fructose-6-phosphate.</text>
</comment>
<comment type="catalytic activity">
    <reaction evidence="1">
        <text>alpha-D-glucose 6-phosphate = beta-D-fructose 6-phosphate</text>
        <dbReference type="Rhea" id="RHEA:11816"/>
        <dbReference type="ChEBI" id="CHEBI:57634"/>
        <dbReference type="ChEBI" id="CHEBI:58225"/>
        <dbReference type="EC" id="5.3.1.9"/>
    </reaction>
</comment>
<comment type="pathway">
    <text evidence="1">Carbohydrate biosynthesis; gluconeogenesis.</text>
</comment>
<comment type="pathway">
    <text evidence="1">Carbohydrate degradation; glycolysis; D-glyceraldehyde 3-phosphate and glycerone phosphate from D-glucose: step 2/4.</text>
</comment>
<comment type="subcellular location">
    <subcellularLocation>
        <location evidence="1">Cytoplasm</location>
    </subcellularLocation>
</comment>
<comment type="similarity">
    <text evidence="1">Belongs to the GPI family.</text>
</comment>
<evidence type="ECO:0000255" key="1">
    <source>
        <dbReference type="HAMAP-Rule" id="MF_00473"/>
    </source>
</evidence>
<organism>
    <name type="scientific">Buchnera aphidicola subsp. Acyrthosiphon pisum (strain 5A)</name>
    <dbReference type="NCBI Taxonomy" id="563178"/>
    <lineage>
        <taxon>Bacteria</taxon>
        <taxon>Pseudomonadati</taxon>
        <taxon>Pseudomonadota</taxon>
        <taxon>Gammaproteobacteria</taxon>
        <taxon>Enterobacterales</taxon>
        <taxon>Erwiniaceae</taxon>
        <taxon>Buchnera</taxon>
    </lineage>
</organism>
<accession>B8D8D7</accession>
<sequence>MKNINFNNTQSYQDLKNHFRKIKNIHLRDLFASDLNRFKKFSIIFENEMLIDFSKNRITDETLIYLLNLAKETDVKSGIKLMFSGAKINKTENRSVLHIALRNRTNRPIILNNCNIMLEVNALLEKMKNFSKMVIHGEWKGYTGKSISNVVNIGIGGSDLGPYMVTEALRPYKNHLNMYYVSNIDGTHLTEVLKKINPENTIFLIASKTFTTDETITNAHSAKKWFLHYSQDQSTLDKHFFALSANIKNALNFGININNIFKFWDWVGGRFSLWSSAGLSIMLSIGFDNFEKFLDGAHAMDNHFYHTNYKENIPILLALISIWYTNFFGSETEAIFPYDQYMHRFSAYFQQSNMESNGKSINRNGQRINYQTGPIIWGEPGTNGQHAFYQLIHQGTRLIPCDFIAPVFSHNDLNNHHMKLISNFFAQTQALAFGQSRDSILHRLILSKKNQDDIKRILPFKICKGNQPTNSILIRKITPYNLGALIALYEHKIFVQGYILNIFSFDQWGVELGKELSQNIYNYLNINIKNKSYDASTEGLINFYKSFMI</sequence>
<proteinExistence type="inferred from homology"/>
<protein>
    <recommendedName>
        <fullName evidence="1">Glucose-6-phosphate isomerase</fullName>
        <shortName evidence="1">GPI</shortName>
        <ecNumber evidence="1">5.3.1.9</ecNumber>
    </recommendedName>
    <alternativeName>
        <fullName evidence="1">Phosphoglucose isomerase</fullName>
        <shortName evidence="1">PGI</shortName>
    </alternativeName>
    <alternativeName>
        <fullName evidence="1">Phosphohexose isomerase</fullName>
        <shortName evidence="1">PHI</shortName>
    </alternativeName>
</protein>